<proteinExistence type="inferred from homology"/>
<protein>
    <recommendedName>
        <fullName>pH-response transcription factor pacC/RIM101</fullName>
    </recommendedName>
</protein>
<sequence>MSPIAHLLNASTGTDSGSHLRDIHGHHDSHDHGSEEQAVSPLSPRSYPSPRSNSSSSCEESQSSAGVLANIHTGPASPHGKACVASSPLSTTGMRSASTPSSSDEDTVHLHRCQWKGCSLEFTSPELLYHHLCQDHVGRKSQKNLQLNCQWGDCQTKTVKRDHITSHLRVHVQLKPFACSTCNKKFKRPQDLKKHLKVHNEELSLLKKKRGPKPSNKLGKISNDRSRAHQRFTLPSISLDKFIHEEVKTQQPVYSQQLAEKMAIVLLLPVNNNNATSPPSASSASSTAVSPNLVSHHMVLPYQTQQRPLVGHGAELRSAVGFFNNLSMDMSRNYANNNLPTANLGPNPVPAPQSYPLIPKLPSISARPNVGAPPPVLSVFNRFDTHQTSPSSSSSAFYPQHYSNNYSLHQRTALLDAEANEDIPEKDNVSLEESFTSLNLSSEEQDLELFYETYSTVKLVKDYLLCELMEELDEFKEEEEEQGFTSFDEFSDSKECVIEGRIPSNKISLSKYPQVVI</sequence>
<reference key="1">
    <citation type="journal article" date="2004" name="Nature">
        <title>Genome evolution in yeasts.</title>
        <authorList>
            <person name="Dujon B."/>
            <person name="Sherman D."/>
            <person name="Fischer G."/>
            <person name="Durrens P."/>
            <person name="Casaregola S."/>
            <person name="Lafontaine I."/>
            <person name="de Montigny J."/>
            <person name="Marck C."/>
            <person name="Neuveglise C."/>
            <person name="Talla E."/>
            <person name="Goffard N."/>
            <person name="Frangeul L."/>
            <person name="Aigle M."/>
            <person name="Anthouard V."/>
            <person name="Babour A."/>
            <person name="Barbe V."/>
            <person name="Barnay S."/>
            <person name="Blanchin S."/>
            <person name="Beckerich J.-M."/>
            <person name="Beyne E."/>
            <person name="Bleykasten C."/>
            <person name="Boisrame A."/>
            <person name="Boyer J."/>
            <person name="Cattolico L."/>
            <person name="Confanioleri F."/>
            <person name="de Daruvar A."/>
            <person name="Despons L."/>
            <person name="Fabre E."/>
            <person name="Fairhead C."/>
            <person name="Ferry-Dumazet H."/>
            <person name="Groppi A."/>
            <person name="Hantraye F."/>
            <person name="Hennequin C."/>
            <person name="Jauniaux N."/>
            <person name="Joyet P."/>
            <person name="Kachouri R."/>
            <person name="Kerrest A."/>
            <person name="Koszul R."/>
            <person name="Lemaire M."/>
            <person name="Lesur I."/>
            <person name="Ma L."/>
            <person name="Muller H."/>
            <person name="Nicaud J.-M."/>
            <person name="Nikolski M."/>
            <person name="Oztas S."/>
            <person name="Ozier-Kalogeropoulos O."/>
            <person name="Pellenz S."/>
            <person name="Potier S."/>
            <person name="Richard G.-F."/>
            <person name="Straub M.-L."/>
            <person name="Suleau A."/>
            <person name="Swennen D."/>
            <person name="Tekaia F."/>
            <person name="Wesolowski-Louvel M."/>
            <person name="Westhof E."/>
            <person name="Wirth B."/>
            <person name="Zeniou-Meyer M."/>
            <person name="Zivanovic Y."/>
            <person name="Bolotin-Fukuhara M."/>
            <person name="Thierry A."/>
            <person name="Bouchier C."/>
            <person name="Caudron B."/>
            <person name="Scarpelli C."/>
            <person name="Gaillardin C."/>
            <person name="Weissenbach J."/>
            <person name="Wincker P."/>
            <person name="Souciet J.-L."/>
        </authorList>
    </citation>
    <scope>NUCLEOTIDE SEQUENCE [LARGE SCALE GENOMIC DNA]</scope>
    <source>
        <strain>ATCC 8585 / CBS 2359 / DSM 70799 / NBRC 1267 / NRRL Y-1140 / WM37</strain>
    </source>
</reference>
<reference key="2">
    <citation type="journal article" date="2000" name="Yeast">
        <title>The ubiquitin-encoding genes of Kluyveromyces lactis.</title>
        <authorList>
            <person name="Bao W.-G."/>
            <person name="Fukuhara H."/>
        </authorList>
    </citation>
    <scope>NUCLEOTIDE SEQUENCE [GENOMIC DNA] OF 1-372</scope>
    <source>
        <strain>ATCC 76492 / CBS 2359/152 / CLIB 210</strain>
    </source>
</reference>
<feature type="chain" id="PRO_0000046836" description="pH-response transcription factor pacC/RIM101">
    <location>
        <begin position="1"/>
        <end position="517"/>
    </location>
</feature>
<feature type="zinc finger region" description="C2H2-type 1" evidence="3">
    <location>
        <begin position="111"/>
        <end position="136"/>
    </location>
</feature>
<feature type="zinc finger region" description="C2H2-type 2" evidence="3">
    <location>
        <begin position="147"/>
        <end position="171"/>
    </location>
</feature>
<feature type="zinc finger region" description="C2H2-type 3" evidence="3">
    <location>
        <begin position="177"/>
        <end position="199"/>
    </location>
</feature>
<feature type="region of interest" description="Disordered" evidence="4">
    <location>
        <begin position="1"/>
        <end position="105"/>
    </location>
</feature>
<feature type="short sequence motif" description="YPX[LI] motif 1">
    <location>
        <begin position="355"/>
        <end position="358"/>
    </location>
</feature>
<feature type="short sequence motif" description="YPX[LI] motif 2" evidence="2">
    <location>
        <begin position="512"/>
        <end position="515"/>
    </location>
</feature>
<feature type="compositionally biased region" description="Basic and acidic residues" evidence="4">
    <location>
        <begin position="18"/>
        <end position="35"/>
    </location>
</feature>
<feature type="compositionally biased region" description="Low complexity" evidence="4">
    <location>
        <begin position="40"/>
        <end position="64"/>
    </location>
</feature>
<feature type="compositionally biased region" description="Polar residues" evidence="4">
    <location>
        <begin position="87"/>
        <end position="102"/>
    </location>
</feature>
<dbReference type="EMBL" id="CR382125">
    <property type="protein sequence ID" value="CAG99069.1"/>
    <property type="molecule type" value="Genomic_DNA"/>
</dbReference>
<dbReference type="EMBL" id="AJ243800">
    <property type="protein sequence ID" value="CAB50896.1"/>
    <property type="molecule type" value="Genomic_DNA"/>
</dbReference>
<dbReference type="PIR" id="T45524">
    <property type="entry name" value="T45524"/>
</dbReference>
<dbReference type="RefSeq" id="XP_453982.1">
    <property type="nucleotide sequence ID" value="XM_453982.1"/>
</dbReference>
<dbReference type="FunCoup" id="Q6CQ07">
    <property type="interactions" value="1503"/>
</dbReference>
<dbReference type="STRING" id="284590.Q6CQ07"/>
<dbReference type="PaxDb" id="284590-Q6CQ07"/>
<dbReference type="KEGG" id="kla:KLLA0_E00793g"/>
<dbReference type="eggNOG" id="KOG1721">
    <property type="taxonomic scope" value="Eukaryota"/>
</dbReference>
<dbReference type="HOGENOM" id="CLU_029652_0_0_1"/>
<dbReference type="InParanoid" id="Q6CQ07"/>
<dbReference type="OMA" id="THLEGNE"/>
<dbReference type="Proteomes" id="UP000000598">
    <property type="component" value="Chromosome E"/>
</dbReference>
<dbReference type="GO" id="GO:0005737">
    <property type="term" value="C:cytoplasm"/>
    <property type="evidence" value="ECO:0007669"/>
    <property type="project" value="UniProtKB-SubCell"/>
</dbReference>
<dbReference type="GO" id="GO:0005634">
    <property type="term" value="C:nucleus"/>
    <property type="evidence" value="ECO:0007669"/>
    <property type="project" value="UniProtKB-SubCell"/>
</dbReference>
<dbReference type="GO" id="GO:0003677">
    <property type="term" value="F:DNA binding"/>
    <property type="evidence" value="ECO:0007669"/>
    <property type="project" value="UniProtKB-KW"/>
</dbReference>
<dbReference type="GO" id="GO:0008270">
    <property type="term" value="F:zinc ion binding"/>
    <property type="evidence" value="ECO:0007669"/>
    <property type="project" value="UniProtKB-KW"/>
</dbReference>
<dbReference type="GO" id="GO:0045944">
    <property type="term" value="P:positive regulation of transcription by RNA polymerase II"/>
    <property type="evidence" value="ECO:0007669"/>
    <property type="project" value="TreeGrafter"/>
</dbReference>
<dbReference type="FunFam" id="3.30.160.60:FF:000340">
    <property type="entry name" value="zinc finger protein 473 isoform X1"/>
    <property type="match status" value="1"/>
</dbReference>
<dbReference type="Gene3D" id="3.30.160.60">
    <property type="entry name" value="Classic Zinc Finger"/>
    <property type="match status" value="2"/>
</dbReference>
<dbReference type="InterPro" id="IPR050806">
    <property type="entry name" value="pacC/RIM101"/>
</dbReference>
<dbReference type="InterPro" id="IPR036236">
    <property type="entry name" value="Znf_C2H2_sf"/>
</dbReference>
<dbReference type="InterPro" id="IPR013087">
    <property type="entry name" value="Znf_C2H2_type"/>
</dbReference>
<dbReference type="PANTHER" id="PTHR47257">
    <property type="entry name" value="PH-RESPONSE TRANSCRIPTION FACTOR PACC/RIM101"/>
    <property type="match status" value="1"/>
</dbReference>
<dbReference type="PANTHER" id="PTHR47257:SF1">
    <property type="entry name" value="PH-RESPONSE TRANSCRIPTION FACTOR PACC_RIM101"/>
    <property type="match status" value="1"/>
</dbReference>
<dbReference type="Pfam" id="PF00096">
    <property type="entry name" value="zf-C2H2"/>
    <property type="match status" value="1"/>
</dbReference>
<dbReference type="SMART" id="SM00355">
    <property type="entry name" value="ZnF_C2H2"/>
    <property type="match status" value="3"/>
</dbReference>
<dbReference type="SUPFAM" id="SSF57667">
    <property type="entry name" value="beta-beta-alpha zinc fingers"/>
    <property type="match status" value="2"/>
</dbReference>
<dbReference type="PROSITE" id="PS00028">
    <property type="entry name" value="ZINC_FINGER_C2H2_1"/>
    <property type="match status" value="2"/>
</dbReference>
<dbReference type="PROSITE" id="PS50157">
    <property type="entry name" value="ZINC_FINGER_C2H2_2"/>
    <property type="match status" value="3"/>
</dbReference>
<accession>Q6CQ07</accession>
<accession>Q9Y850</accession>
<organism>
    <name type="scientific">Kluyveromyces lactis (strain ATCC 8585 / CBS 2359 / DSM 70799 / NBRC 1267 / NRRL Y-1140 / WM37)</name>
    <name type="common">Yeast</name>
    <name type="synonym">Candida sphaerica</name>
    <dbReference type="NCBI Taxonomy" id="284590"/>
    <lineage>
        <taxon>Eukaryota</taxon>
        <taxon>Fungi</taxon>
        <taxon>Dikarya</taxon>
        <taxon>Ascomycota</taxon>
        <taxon>Saccharomycotina</taxon>
        <taxon>Saccharomycetes</taxon>
        <taxon>Saccharomycetales</taxon>
        <taxon>Saccharomycetaceae</taxon>
        <taxon>Kluyveromyces</taxon>
    </lineage>
</organism>
<keyword id="KW-0010">Activator</keyword>
<keyword id="KW-0963">Cytoplasm</keyword>
<keyword id="KW-0238">DNA-binding</keyword>
<keyword id="KW-0479">Metal-binding</keyword>
<keyword id="KW-0539">Nucleus</keyword>
<keyword id="KW-1185">Reference proteome</keyword>
<keyword id="KW-0677">Repeat</keyword>
<keyword id="KW-0678">Repressor</keyword>
<keyword id="KW-0804">Transcription</keyword>
<keyword id="KW-0805">Transcription regulation</keyword>
<keyword id="KW-0862">Zinc</keyword>
<keyword id="KW-0863">Zinc-finger</keyword>
<gene>
    <name type="primary">RIM101</name>
    <name type="ordered locus">KLLA0E00726g</name>
</gene>
<name>PACC_KLULA</name>
<evidence type="ECO:0000250" key="1"/>
<evidence type="ECO:0000255" key="2"/>
<evidence type="ECO:0000255" key="3">
    <source>
        <dbReference type="PROSITE-ProRule" id="PRU00042"/>
    </source>
</evidence>
<evidence type="ECO:0000256" key="4">
    <source>
        <dbReference type="SAM" id="MobiDB-lite"/>
    </source>
</evidence>
<evidence type="ECO:0000305" key="5"/>
<comment type="function">
    <text evidence="1">Transcription factor that mediates regulation of both acid- and alkaline-expressed genes in response to ambient pH. At alkaline ambient pH, activates transcription of alkaline-expressed genes (including RIM101 itself) and represses transcription of acid-expressed genes (By similarity).</text>
</comment>
<comment type="subunit">
    <text evidence="1">Binds to DNA. Interacts with RIM20, which binds to the two YPX[LI] motifs and is required for proteolytic processing (By similarity).</text>
</comment>
<comment type="subcellular location">
    <subcellularLocation>
        <location evidence="1">Cytoplasm</location>
    </subcellularLocation>
    <subcellularLocation>
        <location evidence="1">Nucleus</location>
    </subcellularLocation>
</comment>
<comment type="PTM">
    <text evidence="1">Activated by C-terminal proteolytic cleavage by signaling protease (probably palB/RIM13) at neutral to alkaline ambient pH.</text>
</comment>
<comment type="similarity">
    <text evidence="5">Belongs to the pacC/RIM101 family.</text>
</comment>